<protein>
    <recommendedName>
        <fullName evidence="1">Urease accessory protein UreG</fullName>
    </recommendedName>
</protein>
<feature type="chain" id="PRO_0000347379" description="Urease accessory protein UreG">
    <location>
        <begin position="1"/>
        <end position="215"/>
    </location>
</feature>
<feature type="region of interest" description="Disordered" evidence="2">
    <location>
        <begin position="1"/>
        <end position="21"/>
    </location>
</feature>
<feature type="binding site" evidence="1">
    <location>
        <begin position="24"/>
        <end position="31"/>
    </location>
    <ligand>
        <name>GTP</name>
        <dbReference type="ChEBI" id="CHEBI:37565"/>
    </ligand>
</feature>
<proteinExistence type="inferred from homology"/>
<reference key="1">
    <citation type="submission" date="2005-10" db="EMBL/GenBank/DDBJ databases">
        <title>Complete sequence of chromosome 1 of Burkholderia sp. 383.</title>
        <authorList>
            <consortium name="US DOE Joint Genome Institute"/>
            <person name="Copeland A."/>
            <person name="Lucas S."/>
            <person name="Lapidus A."/>
            <person name="Barry K."/>
            <person name="Detter J.C."/>
            <person name="Glavina T."/>
            <person name="Hammon N."/>
            <person name="Israni S."/>
            <person name="Pitluck S."/>
            <person name="Chain P."/>
            <person name="Malfatti S."/>
            <person name="Shin M."/>
            <person name="Vergez L."/>
            <person name="Schmutz J."/>
            <person name="Larimer F."/>
            <person name="Land M."/>
            <person name="Kyrpides N."/>
            <person name="Lykidis A."/>
            <person name="Richardson P."/>
        </authorList>
    </citation>
    <scope>NUCLEOTIDE SEQUENCE [LARGE SCALE GENOMIC DNA]</scope>
    <source>
        <strain>ATCC 17760 / DSM 23089 / LMG 22485 / NCIMB 9086 / R18194 / 383</strain>
    </source>
</reference>
<accession>Q39IW6</accession>
<gene>
    <name evidence="1" type="primary">ureG</name>
    <name type="ordered locus">Bcep18194_A4003</name>
</gene>
<organism>
    <name type="scientific">Burkholderia lata (strain ATCC 17760 / DSM 23089 / LMG 22485 / NCIMB 9086 / R18194 / 383)</name>
    <dbReference type="NCBI Taxonomy" id="482957"/>
    <lineage>
        <taxon>Bacteria</taxon>
        <taxon>Pseudomonadati</taxon>
        <taxon>Pseudomonadota</taxon>
        <taxon>Betaproteobacteria</taxon>
        <taxon>Burkholderiales</taxon>
        <taxon>Burkholderiaceae</taxon>
        <taxon>Burkholderia</taxon>
        <taxon>Burkholderia cepacia complex</taxon>
    </lineage>
</organism>
<keyword id="KW-0143">Chaperone</keyword>
<keyword id="KW-0963">Cytoplasm</keyword>
<keyword id="KW-0342">GTP-binding</keyword>
<keyword id="KW-0996">Nickel insertion</keyword>
<keyword id="KW-0547">Nucleotide-binding</keyword>
<name>UREG_BURL3</name>
<dbReference type="EMBL" id="CP000151">
    <property type="protein sequence ID" value="ABB07600.1"/>
    <property type="molecule type" value="Genomic_DNA"/>
</dbReference>
<dbReference type="RefSeq" id="WP_011351182.1">
    <property type="nucleotide sequence ID" value="NC_007510.1"/>
</dbReference>
<dbReference type="SMR" id="Q39IW6"/>
<dbReference type="GeneID" id="45093902"/>
<dbReference type="KEGG" id="bur:Bcep18194_A4003"/>
<dbReference type="PATRIC" id="fig|482957.22.peg.883"/>
<dbReference type="HOGENOM" id="CLU_072144_1_0_4"/>
<dbReference type="Proteomes" id="UP000002705">
    <property type="component" value="Chromosome 1"/>
</dbReference>
<dbReference type="GO" id="GO:0005737">
    <property type="term" value="C:cytoplasm"/>
    <property type="evidence" value="ECO:0007669"/>
    <property type="project" value="UniProtKB-SubCell"/>
</dbReference>
<dbReference type="GO" id="GO:0005525">
    <property type="term" value="F:GTP binding"/>
    <property type="evidence" value="ECO:0007669"/>
    <property type="project" value="UniProtKB-KW"/>
</dbReference>
<dbReference type="GO" id="GO:0003924">
    <property type="term" value="F:GTPase activity"/>
    <property type="evidence" value="ECO:0007669"/>
    <property type="project" value="InterPro"/>
</dbReference>
<dbReference type="GO" id="GO:0016151">
    <property type="term" value="F:nickel cation binding"/>
    <property type="evidence" value="ECO:0007669"/>
    <property type="project" value="UniProtKB-UniRule"/>
</dbReference>
<dbReference type="GO" id="GO:0043419">
    <property type="term" value="P:urea catabolic process"/>
    <property type="evidence" value="ECO:0007669"/>
    <property type="project" value="InterPro"/>
</dbReference>
<dbReference type="CDD" id="cd05540">
    <property type="entry name" value="UreG"/>
    <property type="match status" value="1"/>
</dbReference>
<dbReference type="FunFam" id="3.40.50.300:FF:000208">
    <property type="entry name" value="Urease accessory protein UreG"/>
    <property type="match status" value="1"/>
</dbReference>
<dbReference type="Gene3D" id="3.40.50.300">
    <property type="entry name" value="P-loop containing nucleotide triphosphate hydrolases"/>
    <property type="match status" value="1"/>
</dbReference>
<dbReference type="HAMAP" id="MF_01389">
    <property type="entry name" value="UreG"/>
    <property type="match status" value="1"/>
</dbReference>
<dbReference type="InterPro" id="IPR003495">
    <property type="entry name" value="CobW/HypB/UreG_nucleotide-bd"/>
</dbReference>
<dbReference type="InterPro" id="IPR027417">
    <property type="entry name" value="P-loop_NTPase"/>
</dbReference>
<dbReference type="InterPro" id="IPR004400">
    <property type="entry name" value="UreG"/>
</dbReference>
<dbReference type="NCBIfam" id="TIGR00101">
    <property type="entry name" value="ureG"/>
    <property type="match status" value="1"/>
</dbReference>
<dbReference type="PANTHER" id="PTHR31715">
    <property type="entry name" value="UREASE ACCESSORY PROTEIN G"/>
    <property type="match status" value="1"/>
</dbReference>
<dbReference type="PANTHER" id="PTHR31715:SF0">
    <property type="entry name" value="UREASE ACCESSORY PROTEIN G"/>
    <property type="match status" value="1"/>
</dbReference>
<dbReference type="Pfam" id="PF02492">
    <property type="entry name" value="cobW"/>
    <property type="match status" value="1"/>
</dbReference>
<dbReference type="PIRSF" id="PIRSF005624">
    <property type="entry name" value="Ni-bind_GTPase"/>
    <property type="match status" value="1"/>
</dbReference>
<dbReference type="SUPFAM" id="SSF52540">
    <property type="entry name" value="P-loop containing nucleoside triphosphate hydrolases"/>
    <property type="match status" value="1"/>
</dbReference>
<sequence>MNAPAPSSARRTKKLPPLRVGIGGPVGSGKTTLLEMLCKAMRDRYDLVAITNDIYTKEDQRLLTVAGALPEERIMGVETGGCPHTAIREDASINLEAVDRMLSRFPDADIVFIESGGDNLAATFSPELSDLTIYVIDVAGGEKIPRKGGPGITKSDLLVINKTDLAPLVGANLDVMASDTKKMRGERPYVMTNLKALEGVADVIAFIEKKGLLTV</sequence>
<evidence type="ECO:0000255" key="1">
    <source>
        <dbReference type="HAMAP-Rule" id="MF_01389"/>
    </source>
</evidence>
<evidence type="ECO:0000256" key="2">
    <source>
        <dbReference type="SAM" id="MobiDB-lite"/>
    </source>
</evidence>
<comment type="function">
    <text evidence="1">Facilitates the functional incorporation of the urease nickel metallocenter. This process requires GTP hydrolysis, probably effectuated by UreG.</text>
</comment>
<comment type="subunit">
    <text evidence="1">Homodimer. UreD, UreF and UreG form a complex that acts as a GTP-hydrolysis-dependent molecular chaperone, activating the urease apoprotein by helping to assemble the nickel containing metallocenter of UreC. The UreE protein probably delivers the nickel.</text>
</comment>
<comment type="subcellular location">
    <subcellularLocation>
        <location evidence="1">Cytoplasm</location>
    </subcellularLocation>
</comment>
<comment type="similarity">
    <text evidence="1">Belongs to the SIMIBI class G3E GTPase family. UreG subfamily.</text>
</comment>